<keyword id="KW-0687">Ribonucleoprotein</keyword>
<keyword id="KW-0689">Ribosomal protein</keyword>
<accession>P66231</accession>
<accession>Q99UE1</accession>
<proteinExistence type="evidence at protein level"/>
<gene>
    <name type="primary">rpmG2</name>
    <name type="ordered locus">SA1170.1</name>
    <name type="ORF">SAS042</name>
</gene>
<evidence type="ECO:0000255" key="1">
    <source>
        <dbReference type="HAMAP-Rule" id="MF_00294"/>
    </source>
</evidence>
<evidence type="ECO:0000305" key="2"/>
<reference key="1">
    <citation type="journal article" date="2001" name="Lancet">
        <title>Whole genome sequencing of meticillin-resistant Staphylococcus aureus.</title>
        <authorList>
            <person name="Kuroda M."/>
            <person name="Ohta T."/>
            <person name="Uchiyama I."/>
            <person name="Baba T."/>
            <person name="Yuzawa H."/>
            <person name="Kobayashi I."/>
            <person name="Cui L."/>
            <person name="Oguchi A."/>
            <person name="Aoki K."/>
            <person name="Nagai Y."/>
            <person name="Lian J.-Q."/>
            <person name="Ito T."/>
            <person name="Kanamori M."/>
            <person name="Matsumaru H."/>
            <person name="Maruyama A."/>
            <person name="Murakami H."/>
            <person name="Hosoyama A."/>
            <person name="Mizutani-Ui Y."/>
            <person name="Takahashi N.K."/>
            <person name="Sawano T."/>
            <person name="Inoue R."/>
            <person name="Kaito C."/>
            <person name="Sekimizu K."/>
            <person name="Hirakawa H."/>
            <person name="Kuhara S."/>
            <person name="Goto S."/>
            <person name="Yabuzaki J."/>
            <person name="Kanehisa M."/>
            <person name="Yamashita A."/>
            <person name="Oshima K."/>
            <person name="Furuya K."/>
            <person name="Yoshino C."/>
            <person name="Shiba T."/>
            <person name="Hattori M."/>
            <person name="Ogasawara N."/>
            <person name="Hayashi H."/>
            <person name="Hiramatsu K."/>
        </authorList>
    </citation>
    <scope>NUCLEOTIDE SEQUENCE [LARGE SCALE GENOMIC DNA]</scope>
    <source>
        <strain>N315</strain>
    </source>
</reference>
<reference key="2">
    <citation type="submission" date="2007-10" db="UniProtKB">
        <title>Shotgun proteomic analysis of total and membrane protein extracts of S. aureus strain N315.</title>
        <authorList>
            <person name="Vaezzadeh A.R."/>
            <person name="Deshusses J."/>
            <person name="Lescuyer P."/>
            <person name="Hochstrasser D.F."/>
        </authorList>
    </citation>
    <scope>IDENTIFICATION BY MASS SPECTROMETRY [LARGE SCALE ANALYSIS]</scope>
    <source>
        <strain>N315</strain>
    </source>
</reference>
<protein>
    <recommendedName>
        <fullName evidence="1">Large ribosomal subunit protein bL33B</fullName>
    </recommendedName>
    <alternativeName>
        <fullName>50S ribosomal protein L33 2</fullName>
    </alternativeName>
</protein>
<organism>
    <name type="scientific">Staphylococcus aureus (strain N315)</name>
    <dbReference type="NCBI Taxonomy" id="158879"/>
    <lineage>
        <taxon>Bacteria</taxon>
        <taxon>Bacillati</taxon>
        <taxon>Bacillota</taxon>
        <taxon>Bacilli</taxon>
        <taxon>Bacillales</taxon>
        <taxon>Staphylococcaceae</taxon>
        <taxon>Staphylococcus</taxon>
    </lineage>
</organism>
<sequence>MRVNVTLACTECGDRNYITTKNKRNNPERIEMKKYCPRLNKYTLHRETK</sequence>
<name>RL332_STAAN</name>
<comment type="similarity">
    <text evidence="2">Belongs to the bacterial ribosomal protein bL33 family.</text>
</comment>
<dbReference type="EMBL" id="BA000018">
    <property type="protein sequence ID" value="BAB42428.1"/>
    <property type="molecule type" value="Genomic_DNA"/>
</dbReference>
<dbReference type="PIR" id="H89908">
    <property type="entry name" value="H89908"/>
</dbReference>
<dbReference type="SMR" id="P66231"/>
<dbReference type="EnsemblBacteria" id="BAB42428">
    <property type="protein sequence ID" value="BAB42428"/>
    <property type="gene ID" value="BAB42428"/>
</dbReference>
<dbReference type="KEGG" id="sau:SAS042"/>
<dbReference type="HOGENOM" id="CLU_190949_0_2_9"/>
<dbReference type="GO" id="GO:0005737">
    <property type="term" value="C:cytoplasm"/>
    <property type="evidence" value="ECO:0007669"/>
    <property type="project" value="UniProtKB-ARBA"/>
</dbReference>
<dbReference type="GO" id="GO:1990904">
    <property type="term" value="C:ribonucleoprotein complex"/>
    <property type="evidence" value="ECO:0007669"/>
    <property type="project" value="UniProtKB-KW"/>
</dbReference>
<dbReference type="GO" id="GO:0005840">
    <property type="term" value="C:ribosome"/>
    <property type="evidence" value="ECO:0007669"/>
    <property type="project" value="UniProtKB-KW"/>
</dbReference>
<dbReference type="GO" id="GO:0003735">
    <property type="term" value="F:structural constituent of ribosome"/>
    <property type="evidence" value="ECO:0007669"/>
    <property type="project" value="InterPro"/>
</dbReference>
<dbReference type="GO" id="GO:0006412">
    <property type="term" value="P:translation"/>
    <property type="evidence" value="ECO:0007669"/>
    <property type="project" value="UniProtKB-UniRule"/>
</dbReference>
<dbReference type="Gene3D" id="2.20.28.120">
    <property type="entry name" value="Ribosomal protein L33"/>
    <property type="match status" value="1"/>
</dbReference>
<dbReference type="HAMAP" id="MF_00294">
    <property type="entry name" value="Ribosomal_bL33"/>
    <property type="match status" value="1"/>
</dbReference>
<dbReference type="InterPro" id="IPR001705">
    <property type="entry name" value="Ribosomal_bL33"/>
</dbReference>
<dbReference type="InterPro" id="IPR018264">
    <property type="entry name" value="Ribosomal_bL33_CS"/>
</dbReference>
<dbReference type="InterPro" id="IPR038584">
    <property type="entry name" value="Ribosomal_bL33_sf"/>
</dbReference>
<dbReference type="InterPro" id="IPR011332">
    <property type="entry name" value="Ribosomal_zn-bd"/>
</dbReference>
<dbReference type="NCBIfam" id="NF001764">
    <property type="entry name" value="PRK00504.1"/>
    <property type="match status" value="1"/>
</dbReference>
<dbReference type="NCBIfam" id="NF001860">
    <property type="entry name" value="PRK00595.1"/>
    <property type="match status" value="1"/>
</dbReference>
<dbReference type="NCBIfam" id="TIGR01023">
    <property type="entry name" value="rpmG_bact"/>
    <property type="match status" value="1"/>
</dbReference>
<dbReference type="PANTHER" id="PTHR43168">
    <property type="entry name" value="50S RIBOSOMAL PROTEIN L33, CHLOROPLASTIC"/>
    <property type="match status" value="1"/>
</dbReference>
<dbReference type="PANTHER" id="PTHR43168:SF2">
    <property type="entry name" value="LARGE RIBOSOMAL SUBUNIT PROTEIN BL33C"/>
    <property type="match status" value="1"/>
</dbReference>
<dbReference type="Pfam" id="PF00471">
    <property type="entry name" value="Ribosomal_L33"/>
    <property type="match status" value="1"/>
</dbReference>
<dbReference type="SUPFAM" id="SSF57829">
    <property type="entry name" value="Zn-binding ribosomal proteins"/>
    <property type="match status" value="1"/>
</dbReference>
<dbReference type="PROSITE" id="PS00582">
    <property type="entry name" value="RIBOSOMAL_L33"/>
    <property type="match status" value="1"/>
</dbReference>
<feature type="chain" id="PRO_0000170217" description="Large ribosomal subunit protein bL33B">
    <location>
        <begin position="1"/>
        <end position="49"/>
    </location>
</feature>